<keyword id="KW-0007">Acetylation</keyword>
<keyword id="KW-0106">Calcium</keyword>
<keyword id="KW-0479">Metal-binding</keyword>
<keyword id="KW-0677">Repeat</keyword>
<sequence>MADQLTEEQIAEFKEAFSLFDKDGDGTITTKELGTVMRSLGQNPTEAELLVMINEVDADGNGTIDFPEFLTMMARKMKDSDSEEEIKEAFKVFDKDGNGYISAAELRHVMTNLGEKLSEDEVEEMIREADVDGDGQINYEEFVKMMMSK</sequence>
<accession>Q9HFY6</accession>
<protein>
    <recommendedName>
        <fullName>Calmodulin</fullName>
        <shortName>CaM</shortName>
    </recommendedName>
</protein>
<comment type="function">
    <text evidence="1">Calmodulin mediates the control of a large number of enzymes, ion channels and other proteins by Ca(2+). Among the enzymes to be stimulated by the calmodulin-Ca(2+) complex are a number of protein kinases and phosphatases (By similarity).</text>
</comment>
<comment type="miscellaneous">
    <text>This protein has four functional calcium-binding sites.</text>
</comment>
<comment type="similarity">
    <text evidence="3">Belongs to the calmodulin family.</text>
</comment>
<proteinExistence type="inferred from homology"/>
<evidence type="ECO:0000250" key="1"/>
<evidence type="ECO:0000255" key="2">
    <source>
        <dbReference type="PROSITE-ProRule" id="PRU00448"/>
    </source>
</evidence>
<evidence type="ECO:0000305" key="3"/>
<organism>
    <name type="scientific">Blastocladiella emersonii</name>
    <name type="common">Aquatic fungus</name>
    <dbReference type="NCBI Taxonomy" id="4808"/>
    <lineage>
        <taxon>Eukaryota</taxon>
        <taxon>Fungi</taxon>
        <taxon>Fungi incertae sedis</taxon>
        <taxon>Blastocladiomycota</taxon>
        <taxon>Blastocladiomycetes</taxon>
        <taxon>Blastocladiales</taxon>
        <taxon>Blastocladiaceae</taxon>
        <taxon>Blastocladiella</taxon>
    </lineage>
</organism>
<feature type="initiator methionine" description="Removed" evidence="1">
    <location>
        <position position="1"/>
    </location>
</feature>
<feature type="chain" id="PRO_0000198314" description="Calmodulin">
    <location>
        <begin position="2"/>
        <end position="149"/>
    </location>
</feature>
<feature type="domain" description="EF-hand 1" evidence="2">
    <location>
        <begin position="8"/>
        <end position="43"/>
    </location>
</feature>
<feature type="domain" description="EF-hand 2" evidence="2">
    <location>
        <begin position="44"/>
        <end position="79"/>
    </location>
</feature>
<feature type="domain" description="EF-hand 3" evidence="2">
    <location>
        <begin position="81"/>
        <end position="116"/>
    </location>
</feature>
<feature type="domain" description="EF-hand 4" evidence="2">
    <location>
        <begin position="117"/>
        <end position="149"/>
    </location>
</feature>
<feature type="binding site" evidence="2">
    <location>
        <position position="21"/>
    </location>
    <ligand>
        <name>Ca(2+)</name>
        <dbReference type="ChEBI" id="CHEBI:29108"/>
        <label>1</label>
    </ligand>
</feature>
<feature type="binding site" evidence="2">
    <location>
        <position position="23"/>
    </location>
    <ligand>
        <name>Ca(2+)</name>
        <dbReference type="ChEBI" id="CHEBI:29108"/>
        <label>1</label>
    </ligand>
</feature>
<feature type="binding site" evidence="2">
    <location>
        <position position="25"/>
    </location>
    <ligand>
        <name>Ca(2+)</name>
        <dbReference type="ChEBI" id="CHEBI:29108"/>
        <label>1</label>
    </ligand>
</feature>
<feature type="binding site" evidence="2">
    <location>
        <position position="27"/>
    </location>
    <ligand>
        <name>Ca(2+)</name>
        <dbReference type="ChEBI" id="CHEBI:29108"/>
        <label>1</label>
    </ligand>
</feature>
<feature type="binding site" evidence="2">
    <location>
        <position position="32"/>
    </location>
    <ligand>
        <name>Ca(2+)</name>
        <dbReference type="ChEBI" id="CHEBI:29108"/>
        <label>1</label>
    </ligand>
</feature>
<feature type="binding site" evidence="2">
    <location>
        <position position="57"/>
    </location>
    <ligand>
        <name>Ca(2+)</name>
        <dbReference type="ChEBI" id="CHEBI:29108"/>
        <label>2</label>
    </ligand>
</feature>
<feature type="binding site" evidence="2">
    <location>
        <position position="59"/>
    </location>
    <ligand>
        <name>Ca(2+)</name>
        <dbReference type="ChEBI" id="CHEBI:29108"/>
        <label>2</label>
    </ligand>
</feature>
<feature type="binding site" evidence="2">
    <location>
        <position position="61"/>
    </location>
    <ligand>
        <name>Ca(2+)</name>
        <dbReference type="ChEBI" id="CHEBI:29108"/>
        <label>2</label>
    </ligand>
</feature>
<feature type="binding site" evidence="2">
    <location>
        <position position="63"/>
    </location>
    <ligand>
        <name>Ca(2+)</name>
        <dbReference type="ChEBI" id="CHEBI:29108"/>
        <label>2</label>
    </ligand>
</feature>
<feature type="binding site" evidence="2">
    <location>
        <position position="68"/>
    </location>
    <ligand>
        <name>Ca(2+)</name>
        <dbReference type="ChEBI" id="CHEBI:29108"/>
        <label>2</label>
    </ligand>
</feature>
<feature type="binding site" evidence="2">
    <location>
        <position position="94"/>
    </location>
    <ligand>
        <name>Ca(2+)</name>
        <dbReference type="ChEBI" id="CHEBI:29108"/>
        <label>3</label>
    </ligand>
</feature>
<feature type="binding site" evidence="2">
    <location>
        <position position="96"/>
    </location>
    <ligand>
        <name>Ca(2+)</name>
        <dbReference type="ChEBI" id="CHEBI:29108"/>
        <label>3</label>
    </ligand>
</feature>
<feature type="binding site" evidence="2">
    <location>
        <position position="98"/>
    </location>
    <ligand>
        <name>Ca(2+)</name>
        <dbReference type="ChEBI" id="CHEBI:29108"/>
        <label>3</label>
    </ligand>
</feature>
<feature type="binding site" evidence="2">
    <location>
        <position position="100"/>
    </location>
    <ligand>
        <name>Ca(2+)</name>
        <dbReference type="ChEBI" id="CHEBI:29108"/>
        <label>3</label>
    </ligand>
</feature>
<feature type="binding site" evidence="2">
    <location>
        <position position="105"/>
    </location>
    <ligand>
        <name>Ca(2+)</name>
        <dbReference type="ChEBI" id="CHEBI:29108"/>
        <label>3</label>
    </ligand>
</feature>
<feature type="binding site" evidence="2">
    <location>
        <position position="130"/>
    </location>
    <ligand>
        <name>Ca(2+)</name>
        <dbReference type="ChEBI" id="CHEBI:29108"/>
        <label>4</label>
    </ligand>
</feature>
<feature type="binding site" evidence="2">
    <location>
        <position position="132"/>
    </location>
    <ligand>
        <name>Ca(2+)</name>
        <dbReference type="ChEBI" id="CHEBI:29108"/>
        <label>4</label>
    </ligand>
</feature>
<feature type="binding site" evidence="2">
    <location>
        <position position="134"/>
    </location>
    <ligand>
        <name>Ca(2+)</name>
        <dbReference type="ChEBI" id="CHEBI:29108"/>
        <label>4</label>
    </ligand>
</feature>
<feature type="binding site" evidence="2">
    <location>
        <position position="136"/>
    </location>
    <ligand>
        <name>Ca(2+)</name>
        <dbReference type="ChEBI" id="CHEBI:29108"/>
        <label>4</label>
    </ligand>
</feature>
<feature type="binding site" evidence="2">
    <location>
        <position position="141"/>
    </location>
    <ligand>
        <name>Ca(2+)</name>
        <dbReference type="ChEBI" id="CHEBI:29108"/>
        <label>4</label>
    </ligand>
</feature>
<feature type="modified residue" description="N-acetylalanine" evidence="1">
    <location>
        <position position="2"/>
    </location>
</feature>
<gene>
    <name type="primary">CMD1</name>
</gene>
<reference key="1">
    <citation type="journal article" date="2001" name="J. Bacteriol.">
        <title>Structure, expression, and functional analysis of the gene coding for calmodulin in the chytridiomycete Blastocladiella emersonii.</title>
        <authorList>
            <person name="Simao R.C.G."/>
            <person name="Gomes S.L."/>
        </authorList>
    </citation>
    <scope>NUCLEOTIDE SEQUENCE [GENOMIC DNA]</scope>
</reference>
<name>CALM_BLAEM</name>
<dbReference type="EMBL" id="AF264065">
    <property type="protein sequence ID" value="AAG31446.1"/>
    <property type="molecule type" value="Genomic_DNA"/>
</dbReference>
<dbReference type="SMR" id="Q9HFY6"/>
<dbReference type="GO" id="GO:0016460">
    <property type="term" value="C:myosin II complex"/>
    <property type="evidence" value="ECO:0007669"/>
    <property type="project" value="TreeGrafter"/>
</dbReference>
<dbReference type="GO" id="GO:0005509">
    <property type="term" value="F:calcium ion binding"/>
    <property type="evidence" value="ECO:0007669"/>
    <property type="project" value="InterPro"/>
</dbReference>
<dbReference type="CDD" id="cd00051">
    <property type="entry name" value="EFh"/>
    <property type="match status" value="2"/>
</dbReference>
<dbReference type="FunFam" id="1.10.238.10:FF:000257">
    <property type="entry name" value="Calmodulin"/>
    <property type="match status" value="1"/>
</dbReference>
<dbReference type="FunFam" id="1.10.238.10:FF:000027">
    <property type="entry name" value="Calmodulin (CaM)"/>
    <property type="match status" value="1"/>
</dbReference>
<dbReference type="FunFam" id="1.10.238.10:FF:000006">
    <property type="entry name" value="Calmodulin 1"/>
    <property type="match status" value="1"/>
</dbReference>
<dbReference type="Gene3D" id="1.10.238.10">
    <property type="entry name" value="EF-hand"/>
    <property type="match status" value="3"/>
</dbReference>
<dbReference type="InterPro" id="IPR050230">
    <property type="entry name" value="CALM/Myosin/TropC-like"/>
</dbReference>
<dbReference type="InterPro" id="IPR011992">
    <property type="entry name" value="EF-hand-dom_pair"/>
</dbReference>
<dbReference type="InterPro" id="IPR018247">
    <property type="entry name" value="EF_Hand_1_Ca_BS"/>
</dbReference>
<dbReference type="InterPro" id="IPR002048">
    <property type="entry name" value="EF_hand_dom"/>
</dbReference>
<dbReference type="PANTHER" id="PTHR23048:SF0">
    <property type="entry name" value="CALMODULIN LIKE 3"/>
    <property type="match status" value="1"/>
</dbReference>
<dbReference type="PANTHER" id="PTHR23048">
    <property type="entry name" value="MYOSIN LIGHT CHAIN 1, 3"/>
    <property type="match status" value="1"/>
</dbReference>
<dbReference type="Pfam" id="PF13499">
    <property type="entry name" value="EF-hand_7"/>
    <property type="match status" value="2"/>
</dbReference>
<dbReference type="PRINTS" id="PR00450">
    <property type="entry name" value="RECOVERIN"/>
</dbReference>
<dbReference type="SMART" id="SM00054">
    <property type="entry name" value="EFh"/>
    <property type="match status" value="4"/>
</dbReference>
<dbReference type="SUPFAM" id="SSF47473">
    <property type="entry name" value="EF-hand"/>
    <property type="match status" value="1"/>
</dbReference>
<dbReference type="PROSITE" id="PS00018">
    <property type="entry name" value="EF_HAND_1"/>
    <property type="match status" value="4"/>
</dbReference>
<dbReference type="PROSITE" id="PS50222">
    <property type="entry name" value="EF_HAND_2"/>
    <property type="match status" value="4"/>
</dbReference>